<gene>
    <name evidence="1" type="primary">rimM</name>
    <name type="ordered locus">Xaut_2512</name>
</gene>
<dbReference type="EMBL" id="CP000781">
    <property type="protein sequence ID" value="ABS67754.1"/>
    <property type="molecule type" value="Genomic_DNA"/>
</dbReference>
<dbReference type="SMR" id="A7IIB1"/>
<dbReference type="STRING" id="78245.Xaut_2512"/>
<dbReference type="KEGG" id="xau:Xaut_2512"/>
<dbReference type="eggNOG" id="COG0806">
    <property type="taxonomic scope" value="Bacteria"/>
</dbReference>
<dbReference type="HOGENOM" id="CLU_077636_0_1_5"/>
<dbReference type="OrthoDB" id="9788191at2"/>
<dbReference type="PhylomeDB" id="A7IIB1"/>
<dbReference type="Proteomes" id="UP000002417">
    <property type="component" value="Chromosome"/>
</dbReference>
<dbReference type="GO" id="GO:0005737">
    <property type="term" value="C:cytoplasm"/>
    <property type="evidence" value="ECO:0007669"/>
    <property type="project" value="UniProtKB-SubCell"/>
</dbReference>
<dbReference type="GO" id="GO:0005840">
    <property type="term" value="C:ribosome"/>
    <property type="evidence" value="ECO:0007669"/>
    <property type="project" value="InterPro"/>
</dbReference>
<dbReference type="GO" id="GO:0043022">
    <property type="term" value="F:ribosome binding"/>
    <property type="evidence" value="ECO:0007669"/>
    <property type="project" value="InterPro"/>
</dbReference>
<dbReference type="GO" id="GO:0042274">
    <property type="term" value="P:ribosomal small subunit biogenesis"/>
    <property type="evidence" value="ECO:0007669"/>
    <property type="project" value="UniProtKB-UniRule"/>
</dbReference>
<dbReference type="GO" id="GO:0006364">
    <property type="term" value="P:rRNA processing"/>
    <property type="evidence" value="ECO:0007669"/>
    <property type="project" value="UniProtKB-UniRule"/>
</dbReference>
<dbReference type="Gene3D" id="2.30.30.240">
    <property type="entry name" value="PRC-barrel domain"/>
    <property type="match status" value="1"/>
</dbReference>
<dbReference type="Gene3D" id="2.40.30.60">
    <property type="entry name" value="RimM"/>
    <property type="match status" value="1"/>
</dbReference>
<dbReference type="HAMAP" id="MF_00014">
    <property type="entry name" value="Ribosome_mat_RimM"/>
    <property type="match status" value="1"/>
</dbReference>
<dbReference type="InterPro" id="IPR011033">
    <property type="entry name" value="PRC_barrel-like_sf"/>
</dbReference>
<dbReference type="InterPro" id="IPR056792">
    <property type="entry name" value="PRC_RimM"/>
</dbReference>
<dbReference type="InterPro" id="IPR011961">
    <property type="entry name" value="RimM"/>
</dbReference>
<dbReference type="InterPro" id="IPR002676">
    <property type="entry name" value="RimM_N"/>
</dbReference>
<dbReference type="InterPro" id="IPR036976">
    <property type="entry name" value="RimM_N_sf"/>
</dbReference>
<dbReference type="InterPro" id="IPR009000">
    <property type="entry name" value="Transl_B-barrel_sf"/>
</dbReference>
<dbReference type="NCBIfam" id="TIGR02273">
    <property type="entry name" value="16S_RimM"/>
    <property type="match status" value="1"/>
</dbReference>
<dbReference type="PANTHER" id="PTHR33692">
    <property type="entry name" value="RIBOSOME MATURATION FACTOR RIMM"/>
    <property type="match status" value="1"/>
</dbReference>
<dbReference type="PANTHER" id="PTHR33692:SF1">
    <property type="entry name" value="RIBOSOME MATURATION FACTOR RIMM"/>
    <property type="match status" value="1"/>
</dbReference>
<dbReference type="Pfam" id="PF24986">
    <property type="entry name" value="PRC_RimM"/>
    <property type="match status" value="1"/>
</dbReference>
<dbReference type="Pfam" id="PF01782">
    <property type="entry name" value="RimM"/>
    <property type="match status" value="1"/>
</dbReference>
<dbReference type="SUPFAM" id="SSF50346">
    <property type="entry name" value="PRC-barrel domain"/>
    <property type="match status" value="1"/>
</dbReference>
<dbReference type="SUPFAM" id="SSF50447">
    <property type="entry name" value="Translation proteins"/>
    <property type="match status" value="1"/>
</dbReference>
<proteinExistence type="inferred from homology"/>
<sequence>MADRILVARIGAPHGVRGEVRLFVFTEDPGAVLDYDPLTDATGKKRFRIAALRAAKDHFVARIEGIADRTAAEALTNLDLFVPREALPPPDDDDTFYHADLIGLDVVDEAGVVIGKVVALQDFGAGDILEYAPTLPATKAKTLMVPFSKDAVPVVDVPGRRVVVAEAFVERRPAEPEEGEDTGGE</sequence>
<organism>
    <name type="scientific">Xanthobacter autotrophicus (strain ATCC BAA-1158 / Py2)</name>
    <dbReference type="NCBI Taxonomy" id="78245"/>
    <lineage>
        <taxon>Bacteria</taxon>
        <taxon>Pseudomonadati</taxon>
        <taxon>Pseudomonadota</taxon>
        <taxon>Alphaproteobacteria</taxon>
        <taxon>Hyphomicrobiales</taxon>
        <taxon>Xanthobacteraceae</taxon>
        <taxon>Xanthobacter</taxon>
    </lineage>
</organism>
<feature type="chain" id="PRO_1000089533" description="Ribosome maturation factor RimM">
    <location>
        <begin position="1"/>
        <end position="185"/>
    </location>
</feature>
<feature type="domain" description="PRC barrel" evidence="1">
    <location>
        <begin position="92"/>
        <end position="168"/>
    </location>
</feature>
<keyword id="KW-0143">Chaperone</keyword>
<keyword id="KW-0963">Cytoplasm</keyword>
<keyword id="KW-1185">Reference proteome</keyword>
<keyword id="KW-0690">Ribosome biogenesis</keyword>
<keyword id="KW-0698">rRNA processing</keyword>
<reference key="1">
    <citation type="submission" date="2007-07" db="EMBL/GenBank/DDBJ databases">
        <title>Complete sequence of chromosome of Xanthobacter autotrophicus Py2.</title>
        <authorList>
            <consortium name="US DOE Joint Genome Institute"/>
            <person name="Copeland A."/>
            <person name="Lucas S."/>
            <person name="Lapidus A."/>
            <person name="Barry K."/>
            <person name="Glavina del Rio T."/>
            <person name="Hammon N."/>
            <person name="Israni S."/>
            <person name="Dalin E."/>
            <person name="Tice H."/>
            <person name="Pitluck S."/>
            <person name="Sims D."/>
            <person name="Brettin T."/>
            <person name="Bruce D."/>
            <person name="Detter J.C."/>
            <person name="Han C."/>
            <person name="Tapia R."/>
            <person name="Brainard J."/>
            <person name="Schmutz J."/>
            <person name="Larimer F."/>
            <person name="Land M."/>
            <person name="Hauser L."/>
            <person name="Kyrpides N."/>
            <person name="Kim E."/>
            <person name="Ensigns S.A."/>
            <person name="Richardson P."/>
        </authorList>
    </citation>
    <scope>NUCLEOTIDE SEQUENCE [LARGE SCALE GENOMIC DNA]</scope>
    <source>
        <strain>ATCC BAA-1158 / Py2</strain>
    </source>
</reference>
<evidence type="ECO:0000255" key="1">
    <source>
        <dbReference type="HAMAP-Rule" id="MF_00014"/>
    </source>
</evidence>
<comment type="function">
    <text evidence="1">An accessory protein needed during the final step in the assembly of 30S ribosomal subunit, possibly for assembly of the head region. Essential for efficient processing of 16S rRNA. May be needed both before and after RbfA during the maturation of 16S rRNA. It has affinity for free ribosomal 30S subunits but not for 70S ribosomes.</text>
</comment>
<comment type="subunit">
    <text evidence="1">Binds ribosomal protein uS19.</text>
</comment>
<comment type="subcellular location">
    <subcellularLocation>
        <location evidence="1">Cytoplasm</location>
    </subcellularLocation>
</comment>
<comment type="domain">
    <text evidence="1">The PRC barrel domain binds ribosomal protein uS19.</text>
</comment>
<comment type="similarity">
    <text evidence="1">Belongs to the RimM family.</text>
</comment>
<name>RIMM_XANP2</name>
<protein>
    <recommendedName>
        <fullName evidence="1">Ribosome maturation factor RimM</fullName>
    </recommendedName>
</protein>
<accession>A7IIB1</accession>